<keyword id="KW-0963">Cytoplasm</keyword>
<keyword id="KW-0560">Oxidoreductase</keyword>
<dbReference type="EC" id="1.8.4.8" evidence="1"/>
<dbReference type="EMBL" id="AE003849">
    <property type="protein sequence ID" value="AAF84306.1"/>
    <property type="molecule type" value="Genomic_DNA"/>
</dbReference>
<dbReference type="PIR" id="E82674">
    <property type="entry name" value="E82674"/>
</dbReference>
<dbReference type="RefSeq" id="WP_010893998.1">
    <property type="nucleotide sequence ID" value="NC_002488.3"/>
</dbReference>
<dbReference type="SMR" id="Q9PD82"/>
<dbReference type="STRING" id="160492.XF_1497"/>
<dbReference type="KEGG" id="xfa:XF_1497"/>
<dbReference type="PATRIC" id="fig|160492.11.peg.1579"/>
<dbReference type="eggNOG" id="COG0175">
    <property type="taxonomic scope" value="Bacteria"/>
</dbReference>
<dbReference type="HOGENOM" id="CLU_044089_3_0_6"/>
<dbReference type="UniPathway" id="UPA00140">
    <property type="reaction ID" value="UER00206"/>
</dbReference>
<dbReference type="Proteomes" id="UP000000812">
    <property type="component" value="Chromosome"/>
</dbReference>
<dbReference type="GO" id="GO:0005737">
    <property type="term" value="C:cytoplasm"/>
    <property type="evidence" value="ECO:0007669"/>
    <property type="project" value="UniProtKB-SubCell"/>
</dbReference>
<dbReference type="GO" id="GO:0004604">
    <property type="term" value="F:phosphoadenylyl-sulfate reductase (thioredoxin) activity"/>
    <property type="evidence" value="ECO:0007669"/>
    <property type="project" value="UniProtKB-UniRule"/>
</dbReference>
<dbReference type="GO" id="GO:0070814">
    <property type="term" value="P:hydrogen sulfide biosynthetic process"/>
    <property type="evidence" value="ECO:0007669"/>
    <property type="project" value="UniProtKB-UniRule"/>
</dbReference>
<dbReference type="GO" id="GO:0019379">
    <property type="term" value="P:sulfate assimilation, phosphoadenylyl sulfate reduction by phosphoadenylyl-sulfate reductase (thioredoxin)"/>
    <property type="evidence" value="ECO:0007669"/>
    <property type="project" value="UniProtKB-UniRule"/>
</dbReference>
<dbReference type="CDD" id="cd23945">
    <property type="entry name" value="PAPS_reductase"/>
    <property type="match status" value="1"/>
</dbReference>
<dbReference type="FunFam" id="3.40.50.620:FF:000043">
    <property type="entry name" value="Phosphoadenosine phosphosulfate reductase"/>
    <property type="match status" value="1"/>
</dbReference>
<dbReference type="Gene3D" id="3.40.50.620">
    <property type="entry name" value="HUPs"/>
    <property type="match status" value="1"/>
</dbReference>
<dbReference type="HAMAP" id="MF_00063">
    <property type="entry name" value="CysH"/>
    <property type="match status" value="1"/>
</dbReference>
<dbReference type="InterPro" id="IPR004511">
    <property type="entry name" value="PAPS/APS_Rdtase"/>
</dbReference>
<dbReference type="InterPro" id="IPR002500">
    <property type="entry name" value="PAPS_reduct_dom"/>
</dbReference>
<dbReference type="InterPro" id="IPR011800">
    <property type="entry name" value="PAPS_reductase_CysH"/>
</dbReference>
<dbReference type="InterPro" id="IPR014729">
    <property type="entry name" value="Rossmann-like_a/b/a_fold"/>
</dbReference>
<dbReference type="NCBIfam" id="TIGR00434">
    <property type="entry name" value="cysH"/>
    <property type="match status" value="1"/>
</dbReference>
<dbReference type="NCBIfam" id="TIGR02057">
    <property type="entry name" value="PAPS_reductase"/>
    <property type="match status" value="1"/>
</dbReference>
<dbReference type="NCBIfam" id="NF002537">
    <property type="entry name" value="PRK02090.1"/>
    <property type="match status" value="1"/>
</dbReference>
<dbReference type="PANTHER" id="PTHR46509">
    <property type="entry name" value="PHOSPHOADENOSINE PHOSPHOSULFATE REDUCTASE"/>
    <property type="match status" value="1"/>
</dbReference>
<dbReference type="PANTHER" id="PTHR46509:SF1">
    <property type="entry name" value="PHOSPHOADENOSINE PHOSPHOSULFATE REDUCTASE"/>
    <property type="match status" value="1"/>
</dbReference>
<dbReference type="Pfam" id="PF01507">
    <property type="entry name" value="PAPS_reduct"/>
    <property type="match status" value="1"/>
</dbReference>
<dbReference type="PIRSF" id="PIRSF000857">
    <property type="entry name" value="PAPS_reductase"/>
    <property type="match status" value="1"/>
</dbReference>
<dbReference type="SUPFAM" id="SSF52402">
    <property type="entry name" value="Adenine nucleotide alpha hydrolases-like"/>
    <property type="match status" value="1"/>
</dbReference>
<comment type="function">
    <text evidence="1">Catalyzes the formation of sulfite from phosphoadenosine 5'-phosphosulfate (PAPS) using thioredoxin as an electron donor.</text>
</comment>
<comment type="catalytic activity">
    <reaction evidence="1">
        <text>[thioredoxin]-disulfide + sulfite + adenosine 3',5'-bisphosphate + 2 H(+) = [thioredoxin]-dithiol + 3'-phosphoadenylyl sulfate</text>
        <dbReference type="Rhea" id="RHEA:11724"/>
        <dbReference type="Rhea" id="RHEA-COMP:10698"/>
        <dbReference type="Rhea" id="RHEA-COMP:10700"/>
        <dbReference type="ChEBI" id="CHEBI:15378"/>
        <dbReference type="ChEBI" id="CHEBI:17359"/>
        <dbReference type="ChEBI" id="CHEBI:29950"/>
        <dbReference type="ChEBI" id="CHEBI:50058"/>
        <dbReference type="ChEBI" id="CHEBI:58339"/>
        <dbReference type="ChEBI" id="CHEBI:58343"/>
        <dbReference type="EC" id="1.8.4.8"/>
    </reaction>
</comment>
<comment type="pathway">
    <text evidence="1">Sulfur metabolism; hydrogen sulfide biosynthesis; sulfite from sulfate: step 3/3.</text>
</comment>
<comment type="subcellular location">
    <subcellularLocation>
        <location evidence="1">Cytoplasm</location>
    </subcellularLocation>
</comment>
<comment type="similarity">
    <text evidence="1">Belongs to the PAPS reductase family. CysH subfamily.</text>
</comment>
<accession>Q9PD82</accession>
<sequence>MTVLPALPPLDDLETLNVHLETLSAENRVCWALERGPDHPALSSSFGAQSAVMLHLLTRFAPDIPVILVDTGYLFPETYRFADTLTERLKLNLKVYQPLRSGAWTEARHGRLWEQGIDGINQYNTLHKVEPMRRALEELQVGTWFTGLRRGQSSTRTQTSIVQQRDERYKISPIADWTDRDIWEYMKHHDLPYHPLWEQGYVSIGDIHTTRPLEPGMREEDTRFFGFKRECGIHENI</sequence>
<proteinExistence type="inferred from homology"/>
<protein>
    <recommendedName>
        <fullName evidence="1">Phosphoadenosine 5'-phosphosulfate reductase</fullName>
        <shortName evidence="1">PAPS reductase</shortName>
        <ecNumber evidence="1">1.8.4.8</ecNumber>
    </recommendedName>
    <alternativeName>
        <fullName evidence="1">3'-phosphoadenylylsulfate reductase</fullName>
    </alternativeName>
    <alternativeName>
        <fullName evidence="1">PAPS reductase, thioredoxin dependent</fullName>
    </alternativeName>
    <alternativeName>
        <fullName evidence="1">PAPS sulfotransferase</fullName>
    </alternativeName>
    <alternativeName>
        <fullName evidence="1">PAdoPS reductase</fullName>
    </alternativeName>
</protein>
<reference key="1">
    <citation type="journal article" date="2000" name="Nature">
        <title>The genome sequence of the plant pathogen Xylella fastidiosa.</title>
        <authorList>
            <person name="Simpson A.J.G."/>
            <person name="Reinach F.C."/>
            <person name="Arruda P."/>
            <person name="Abreu F.A."/>
            <person name="Acencio M."/>
            <person name="Alvarenga R."/>
            <person name="Alves L.M.C."/>
            <person name="Araya J.E."/>
            <person name="Baia G.S."/>
            <person name="Baptista C.S."/>
            <person name="Barros M.H."/>
            <person name="Bonaccorsi E.D."/>
            <person name="Bordin S."/>
            <person name="Bove J.M."/>
            <person name="Briones M.R.S."/>
            <person name="Bueno M.R.P."/>
            <person name="Camargo A.A."/>
            <person name="Camargo L.E.A."/>
            <person name="Carraro D.M."/>
            <person name="Carrer H."/>
            <person name="Colauto N.B."/>
            <person name="Colombo C."/>
            <person name="Costa F.F."/>
            <person name="Costa M.C.R."/>
            <person name="Costa-Neto C.M."/>
            <person name="Coutinho L.L."/>
            <person name="Cristofani M."/>
            <person name="Dias-Neto E."/>
            <person name="Docena C."/>
            <person name="El-Dorry H."/>
            <person name="Facincani A.P."/>
            <person name="Ferreira A.J.S."/>
            <person name="Ferreira V.C.A."/>
            <person name="Ferro J.A."/>
            <person name="Fraga J.S."/>
            <person name="Franca S.C."/>
            <person name="Franco M.C."/>
            <person name="Frohme M."/>
            <person name="Furlan L.R."/>
            <person name="Garnier M."/>
            <person name="Goldman G.H."/>
            <person name="Goldman M.H.S."/>
            <person name="Gomes S.L."/>
            <person name="Gruber A."/>
            <person name="Ho P.L."/>
            <person name="Hoheisel J.D."/>
            <person name="Junqueira M.L."/>
            <person name="Kemper E.L."/>
            <person name="Kitajima J.P."/>
            <person name="Krieger J.E."/>
            <person name="Kuramae E.E."/>
            <person name="Laigret F."/>
            <person name="Lambais M.R."/>
            <person name="Leite L.C.C."/>
            <person name="Lemos E.G.M."/>
            <person name="Lemos M.V.F."/>
            <person name="Lopes S.A."/>
            <person name="Lopes C.R."/>
            <person name="Machado J.A."/>
            <person name="Machado M.A."/>
            <person name="Madeira A.M.B.N."/>
            <person name="Madeira H.M.F."/>
            <person name="Marino C.L."/>
            <person name="Marques M.V."/>
            <person name="Martins E.A.L."/>
            <person name="Martins E.M.F."/>
            <person name="Matsukuma A.Y."/>
            <person name="Menck C.F.M."/>
            <person name="Miracca E.C."/>
            <person name="Miyaki C.Y."/>
            <person name="Monteiro-Vitorello C.B."/>
            <person name="Moon D.H."/>
            <person name="Nagai M.A."/>
            <person name="Nascimento A.L.T.O."/>
            <person name="Netto L.E.S."/>
            <person name="Nhani A. Jr."/>
            <person name="Nobrega F.G."/>
            <person name="Nunes L.R."/>
            <person name="Oliveira M.A."/>
            <person name="de Oliveira M.C."/>
            <person name="de Oliveira R.C."/>
            <person name="Palmieri D.A."/>
            <person name="Paris A."/>
            <person name="Peixoto B.R."/>
            <person name="Pereira G.A.G."/>
            <person name="Pereira H.A. Jr."/>
            <person name="Pesquero J.B."/>
            <person name="Quaggio R.B."/>
            <person name="Roberto P.G."/>
            <person name="Rodrigues V."/>
            <person name="de Rosa A.J.M."/>
            <person name="de Rosa V.E. Jr."/>
            <person name="de Sa R.G."/>
            <person name="Santelli R.V."/>
            <person name="Sawasaki H.E."/>
            <person name="da Silva A.C.R."/>
            <person name="da Silva A.M."/>
            <person name="da Silva F.R."/>
            <person name="Silva W.A. Jr."/>
            <person name="da Silveira J.F."/>
            <person name="Silvestri M.L.Z."/>
            <person name="Siqueira W.J."/>
            <person name="de Souza A.A."/>
            <person name="de Souza A.P."/>
            <person name="Terenzi M.F."/>
            <person name="Truffi D."/>
            <person name="Tsai S.M."/>
            <person name="Tsuhako M.H."/>
            <person name="Vallada H."/>
            <person name="Van Sluys M.A."/>
            <person name="Verjovski-Almeida S."/>
            <person name="Vettore A.L."/>
            <person name="Zago M.A."/>
            <person name="Zatz M."/>
            <person name="Meidanis J."/>
            <person name="Setubal J.C."/>
        </authorList>
    </citation>
    <scope>NUCLEOTIDE SEQUENCE [LARGE SCALE GENOMIC DNA]</scope>
    <source>
        <strain>9a5c</strain>
    </source>
</reference>
<name>CYSH_XYLFA</name>
<evidence type="ECO:0000255" key="1">
    <source>
        <dbReference type="HAMAP-Rule" id="MF_00063"/>
    </source>
</evidence>
<organism>
    <name type="scientific">Xylella fastidiosa (strain 9a5c)</name>
    <dbReference type="NCBI Taxonomy" id="160492"/>
    <lineage>
        <taxon>Bacteria</taxon>
        <taxon>Pseudomonadati</taxon>
        <taxon>Pseudomonadota</taxon>
        <taxon>Gammaproteobacteria</taxon>
        <taxon>Lysobacterales</taxon>
        <taxon>Lysobacteraceae</taxon>
        <taxon>Xylella</taxon>
    </lineage>
</organism>
<gene>
    <name evidence="1" type="primary">cysH</name>
    <name type="ordered locus">XF_1497</name>
</gene>
<feature type="chain" id="PRO_0000100658" description="Phosphoadenosine 5'-phosphosulfate reductase">
    <location>
        <begin position="1"/>
        <end position="237"/>
    </location>
</feature>
<feature type="active site" description="Nucleophile; cysteine thiosulfonate intermediate" evidence="1">
    <location>
        <position position="231"/>
    </location>
</feature>